<proteinExistence type="evidence at protein level"/>
<sequence>MLTAAGDDELDPVVGPESATEAATPRVLTIISHVMEKLVARNEWLAKQTKGFGKSLEAFHGVRAPSISIAKYLERIYKYTKCSPACFVVGYVYIDRLAHKHPGSLVVSLNVHRLLVTCVMIAAKILDDVHYNNEFYARVGGVSNADLNKMELELLFLLDFRVTVSFRVFESYCFHLEKEMQLNDAVSSLKDIQPMQESLSPASTLSSLYV</sequence>
<organism>
    <name type="scientific">Arabidopsis thaliana</name>
    <name type="common">Mouse-ear cress</name>
    <dbReference type="NCBI Taxonomy" id="3702"/>
    <lineage>
        <taxon>Eukaryota</taxon>
        <taxon>Viridiplantae</taxon>
        <taxon>Streptophyta</taxon>
        <taxon>Embryophyta</taxon>
        <taxon>Tracheophyta</taxon>
        <taxon>Spermatophyta</taxon>
        <taxon>Magnoliopsida</taxon>
        <taxon>eudicotyledons</taxon>
        <taxon>Gunneridae</taxon>
        <taxon>Pentapetalae</taxon>
        <taxon>rosids</taxon>
        <taxon>malvids</taxon>
        <taxon>Brassicales</taxon>
        <taxon>Brassicaceae</taxon>
        <taxon>Camelineae</taxon>
        <taxon>Arabidopsis</taxon>
    </lineage>
</organism>
<comment type="subunit">
    <text evidence="1">Interacts with CDKA-1.</text>
</comment>
<comment type="interaction">
    <interactant intactId="EBI-1773749">
        <id>Q9LJ45</id>
    </interactant>
    <interactant intactId="EBI-371713">
        <id>P24100</id>
        <label>CDKA-1</label>
    </interactant>
    <organismsDiffer>false</organismsDiffer>
    <experiments>2</experiments>
</comment>
<comment type="tissue specificity">
    <text evidence="1">Expressed in roots and flowers. Expressed in the shoot apex, leaf primordia and young leaves.</text>
</comment>
<comment type="similarity">
    <text evidence="2">Belongs to the cyclin family. Cyclin U/P subfamily.</text>
</comment>
<name>CCU11_ARATH</name>
<gene>
    <name type="primary">CYCU1-1</name>
    <name type="ordered locus">At3g21870</name>
    <name type="ORF">MEK6.1</name>
</gene>
<reference key="1">
    <citation type="journal article" date="2000" name="DNA Res.">
        <title>Structural analysis of Arabidopsis thaliana chromosome 3. II. Sequence features of the 4,251,695 bp regions covered by 90 P1, TAC and BAC clones.</title>
        <authorList>
            <person name="Kaneko T."/>
            <person name="Katoh T."/>
            <person name="Sato S."/>
            <person name="Nakamura Y."/>
            <person name="Asamizu E."/>
            <person name="Tabata S."/>
        </authorList>
    </citation>
    <scope>NUCLEOTIDE SEQUENCE [LARGE SCALE GENOMIC DNA]</scope>
    <source>
        <strain>cv. Columbia</strain>
    </source>
</reference>
<reference key="2">
    <citation type="journal article" date="2017" name="Plant J.">
        <title>Araport11: a complete reannotation of the Arabidopsis thaliana reference genome.</title>
        <authorList>
            <person name="Cheng C.Y."/>
            <person name="Krishnakumar V."/>
            <person name="Chan A.P."/>
            <person name="Thibaud-Nissen F."/>
            <person name="Schobel S."/>
            <person name="Town C.D."/>
        </authorList>
    </citation>
    <scope>GENOME REANNOTATION</scope>
    <source>
        <strain>cv. Columbia</strain>
    </source>
</reference>
<reference key="3">
    <citation type="submission" date="2004-09" db="EMBL/GenBank/DDBJ databases">
        <title>Arabidopsis ORF clones.</title>
        <authorList>
            <person name="Shinn P."/>
            <person name="Chen H."/>
            <person name="Cheuk R.F."/>
            <person name="Kim C.J."/>
            <person name="Ecker J.R."/>
        </authorList>
    </citation>
    <scope>NUCLEOTIDE SEQUENCE [LARGE SCALE MRNA]</scope>
    <source>
        <strain>cv. Columbia</strain>
    </source>
</reference>
<reference key="4">
    <citation type="journal article" date="2004" name="Cell. Mol. Life Sci.">
        <title>Molecular characterization of Arabidopsis PHO80-like proteins, a novel class of CDKA;1-interacting cyclins.</title>
        <authorList>
            <person name="Torres Acosta J.A."/>
            <person name="de Almeida Engler J."/>
            <person name="Raes J."/>
            <person name="Magyar Z."/>
            <person name="de Groodt R."/>
            <person name="Inze D."/>
            <person name="de Veylder L."/>
        </authorList>
    </citation>
    <scope>TISSUE SPECIFICITY</scope>
    <scope>INTERACTION WITH CDKA-1</scope>
</reference>
<reference key="5">
    <citation type="journal article" date="2004" name="Plant Physiol.">
        <title>Genome-wide analysis of the cyclin family in Arabidopsis and comparative phylogenetic analysis of plant cyclin-like proteins.</title>
        <authorList>
            <person name="Wang G."/>
            <person name="Kong H."/>
            <person name="Sun Y."/>
            <person name="Zhang X."/>
            <person name="Zhang W."/>
            <person name="Altman N."/>
            <person name="dePamphilis C.W."/>
            <person name="Ma H."/>
        </authorList>
    </citation>
    <scope>GENE FAMILY</scope>
    <scope>NOMENCLATURE</scope>
</reference>
<protein>
    <recommendedName>
        <fullName>Cyclin-U1-1</fullName>
        <shortName>CycU1;1</shortName>
    </recommendedName>
    <alternativeName>
        <fullName>Cyclin-P2.1</fullName>
        <shortName>CycP2;1</shortName>
    </alternativeName>
</protein>
<dbReference type="EMBL" id="AP000739">
    <property type="protein sequence ID" value="BAB02187.1"/>
    <property type="molecule type" value="Genomic_DNA"/>
</dbReference>
<dbReference type="EMBL" id="CP002686">
    <property type="protein sequence ID" value="AEE76561.1"/>
    <property type="molecule type" value="Genomic_DNA"/>
</dbReference>
<dbReference type="EMBL" id="BT014779">
    <property type="protein sequence ID" value="AAT41762.1"/>
    <property type="molecule type" value="mRNA"/>
</dbReference>
<dbReference type="EMBL" id="BT015746">
    <property type="protein sequence ID" value="AAU84683.1"/>
    <property type="molecule type" value="mRNA"/>
</dbReference>
<dbReference type="SMR" id="Q9LJ45"/>
<dbReference type="BioGRID" id="7074">
    <property type="interactions" value="3"/>
</dbReference>
<dbReference type="FunCoup" id="Q9LJ45">
    <property type="interactions" value="262"/>
</dbReference>
<dbReference type="IntAct" id="Q9LJ45">
    <property type="interactions" value="1"/>
</dbReference>
<dbReference type="STRING" id="3702.Q9LJ45"/>
<dbReference type="PaxDb" id="3702-AT3G21870.1"/>
<dbReference type="ProteomicsDB" id="223875"/>
<dbReference type="EnsemblPlants" id="AT3G21870.1">
    <property type="protein sequence ID" value="AT3G21870.1"/>
    <property type="gene ID" value="AT3G21870"/>
</dbReference>
<dbReference type="Gramene" id="AT3G21870.1">
    <property type="protein sequence ID" value="AT3G21870.1"/>
    <property type="gene ID" value="AT3G21870"/>
</dbReference>
<dbReference type="KEGG" id="ath:AT3G21870"/>
<dbReference type="Araport" id="AT3G21870"/>
<dbReference type="TAIR" id="AT3G21870">
    <property type="gene designation" value="CYCP2"/>
</dbReference>
<dbReference type="eggNOG" id="KOG1674">
    <property type="taxonomic scope" value="Eukaryota"/>
</dbReference>
<dbReference type="HOGENOM" id="CLU_057371_0_1_1"/>
<dbReference type="InParanoid" id="Q9LJ45"/>
<dbReference type="OMA" id="FVYIDRL"/>
<dbReference type="OrthoDB" id="337735at2759"/>
<dbReference type="PhylomeDB" id="Q9LJ45"/>
<dbReference type="PRO" id="PR:Q9LJ45"/>
<dbReference type="Proteomes" id="UP000006548">
    <property type="component" value="Chromosome 3"/>
</dbReference>
<dbReference type="ExpressionAtlas" id="Q9LJ45">
    <property type="expression patterns" value="baseline and differential"/>
</dbReference>
<dbReference type="GO" id="GO:0019901">
    <property type="term" value="F:protein kinase binding"/>
    <property type="evidence" value="ECO:0007669"/>
    <property type="project" value="InterPro"/>
</dbReference>
<dbReference type="GO" id="GO:0051301">
    <property type="term" value="P:cell division"/>
    <property type="evidence" value="ECO:0007669"/>
    <property type="project" value="UniProtKB-KW"/>
</dbReference>
<dbReference type="Gene3D" id="1.10.472.10">
    <property type="entry name" value="Cyclin-like"/>
    <property type="match status" value="1"/>
</dbReference>
<dbReference type="InterPro" id="IPR036915">
    <property type="entry name" value="Cyclin-like_sf"/>
</dbReference>
<dbReference type="InterPro" id="IPR012389">
    <property type="entry name" value="Cyclin_P/U"/>
</dbReference>
<dbReference type="InterPro" id="IPR013922">
    <property type="entry name" value="Cyclin_PHO80-like"/>
</dbReference>
<dbReference type="PANTHER" id="PTHR15615">
    <property type="match status" value="1"/>
</dbReference>
<dbReference type="PANTHER" id="PTHR15615:SF121">
    <property type="entry name" value="CYCLIN-U1-1"/>
    <property type="match status" value="1"/>
</dbReference>
<dbReference type="Pfam" id="PF08613">
    <property type="entry name" value="Cyclin"/>
    <property type="match status" value="1"/>
</dbReference>
<dbReference type="PIRSF" id="PIRSF027110">
    <property type="entry name" value="PREG"/>
    <property type="match status" value="1"/>
</dbReference>
<dbReference type="SUPFAM" id="SSF47954">
    <property type="entry name" value="Cyclin-like"/>
    <property type="match status" value="1"/>
</dbReference>
<feature type="chain" id="PRO_0000287068" description="Cyclin-U1-1">
    <location>
        <begin position="1"/>
        <end position="210"/>
    </location>
</feature>
<keyword id="KW-0131">Cell cycle</keyword>
<keyword id="KW-0132">Cell division</keyword>
<keyword id="KW-0195">Cyclin</keyword>
<keyword id="KW-1185">Reference proteome</keyword>
<evidence type="ECO:0000269" key="1">
    <source>
    </source>
</evidence>
<evidence type="ECO:0000305" key="2"/>
<accession>Q9LJ45</accession>